<dbReference type="EC" id="3.1.4.4"/>
<dbReference type="EMBL" id="AB001919">
    <property type="protein sequence ID" value="BAA19466.1"/>
    <property type="molecule type" value="Genomic_DNA"/>
</dbReference>
<dbReference type="EMBL" id="AP003629">
    <property type="protein sequence ID" value="BAD35531.1"/>
    <property type="molecule type" value="Genomic_DNA"/>
</dbReference>
<dbReference type="EMBL" id="AP008212">
    <property type="protein sequence ID" value="BAF19931.1"/>
    <property type="molecule type" value="Genomic_DNA"/>
</dbReference>
<dbReference type="EMBL" id="AP014962">
    <property type="protein sequence ID" value="BAS98517.1"/>
    <property type="molecule type" value="Genomic_DNA"/>
</dbReference>
<dbReference type="EMBL" id="CM000143">
    <property type="protein sequence ID" value="EEE65982.1"/>
    <property type="molecule type" value="Genomic_DNA"/>
</dbReference>
<dbReference type="EMBL" id="AK072121">
    <property type="status" value="NOT_ANNOTATED_CDS"/>
    <property type="molecule type" value="mRNA"/>
</dbReference>
<dbReference type="PIR" id="T03401">
    <property type="entry name" value="T03401"/>
</dbReference>
<dbReference type="RefSeq" id="XP_015643893.1">
    <property type="nucleotide sequence ID" value="XM_015788407.1"/>
</dbReference>
<dbReference type="SMR" id="P93844"/>
<dbReference type="FunCoup" id="P93844">
    <property type="interactions" value="742"/>
</dbReference>
<dbReference type="STRING" id="39947.P93844"/>
<dbReference type="PaxDb" id="39947-P93844"/>
<dbReference type="EnsemblPlants" id="Os06t0604400-01">
    <property type="protein sequence ID" value="Os06t0604400-01"/>
    <property type="gene ID" value="Os06g0604400"/>
</dbReference>
<dbReference type="Gramene" id="Os06t0604400-01">
    <property type="protein sequence ID" value="Os06t0604400-01"/>
    <property type="gene ID" value="Os06g0604400"/>
</dbReference>
<dbReference type="KEGG" id="dosa:Os06g0604400"/>
<dbReference type="eggNOG" id="KOG1329">
    <property type="taxonomic scope" value="Eukaryota"/>
</dbReference>
<dbReference type="HOGENOM" id="CLU_004684_0_0_1"/>
<dbReference type="InParanoid" id="P93844"/>
<dbReference type="OMA" id="TITHHQK"/>
<dbReference type="OrthoDB" id="14911at2759"/>
<dbReference type="PlantReactome" id="R-OSA-1119276">
    <property type="pathway name" value="Choline biosynthesis III"/>
</dbReference>
<dbReference type="Proteomes" id="UP000000763">
    <property type="component" value="Chromosome 6"/>
</dbReference>
<dbReference type="Proteomes" id="UP000007752">
    <property type="component" value="Chromosome 6"/>
</dbReference>
<dbReference type="Proteomes" id="UP000059680">
    <property type="component" value="Chromosome 6"/>
</dbReference>
<dbReference type="GO" id="GO:0005886">
    <property type="term" value="C:plasma membrane"/>
    <property type="evidence" value="ECO:0000318"/>
    <property type="project" value="GO_Central"/>
</dbReference>
<dbReference type="GO" id="GO:0005509">
    <property type="term" value="F:calcium ion binding"/>
    <property type="evidence" value="ECO:0007669"/>
    <property type="project" value="InterPro"/>
</dbReference>
<dbReference type="GO" id="GO:0004630">
    <property type="term" value="F:phospholipase D activity"/>
    <property type="evidence" value="ECO:0000318"/>
    <property type="project" value="GO_Central"/>
</dbReference>
<dbReference type="GO" id="GO:0046470">
    <property type="term" value="P:phosphatidylcholine metabolic process"/>
    <property type="evidence" value="ECO:0007669"/>
    <property type="project" value="InterPro"/>
</dbReference>
<dbReference type="GO" id="GO:0009395">
    <property type="term" value="P:phospholipid catabolic process"/>
    <property type="evidence" value="ECO:0000318"/>
    <property type="project" value="GO_Central"/>
</dbReference>
<dbReference type="CDD" id="cd04015">
    <property type="entry name" value="C2_plant_PLD"/>
    <property type="match status" value="1"/>
</dbReference>
<dbReference type="FunFam" id="3.30.870.10:FF:000027">
    <property type="entry name" value="Phospholipase D"/>
    <property type="match status" value="1"/>
</dbReference>
<dbReference type="FunFam" id="3.30.870.10:FF:000025">
    <property type="entry name" value="Phospholipase D delta"/>
    <property type="match status" value="1"/>
</dbReference>
<dbReference type="Gene3D" id="2.60.40.150">
    <property type="entry name" value="C2 domain"/>
    <property type="match status" value="1"/>
</dbReference>
<dbReference type="Gene3D" id="3.30.870.10">
    <property type="entry name" value="Endonuclease Chain A"/>
    <property type="match status" value="2"/>
</dbReference>
<dbReference type="InterPro" id="IPR000008">
    <property type="entry name" value="C2_dom"/>
</dbReference>
<dbReference type="InterPro" id="IPR035892">
    <property type="entry name" value="C2_domain_sf"/>
</dbReference>
<dbReference type="InterPro" id="IPR001736">
    <property type="entry name" value="PLipase_D/transphosphatidylase"/>
</dbReference>
<dbReference type="InterPro" id="IPR024632">
    <property type="entry name" value="PLipase_D_C"/>
</dbReference>
<dbReference type="InterPro" id="IPR015679">
    <property type="entry name" value="PLipase_D_fam"/>
</dbReference>
<dbReference type="InterPro" id="IPR011402">
    <property type="entry name" value="PLipase_D_pln"/>
</dbReference>
<dbReference type="PANTHER" id="PTHR18896">
    <property type="entry name" value="PHOSPHOLIPASE D"/>
    <property type="match status" value="1"/>
</dbReference>
<dbReference type="PANTHER" id="PTHR18896:SF59">
    <property type="entry name" value="PHOSPHOLIPASE D ALPHA 2"/>
    <property type="match status" value="1"/>
</dbReference>
<dbReference type="Pfam" id="PF00168">
    <property type="entry name" value="C2"/>
    <property type="match status" value="1"/>
</dbReference>
<dbReference type="Pfam" id="PF12357">
    <property type="entry name" value="PLD_C"/>
    <property type="match status" value="1"/>
</dbReference>
<dbReference type="Pfam" id="PF00614">
    <property type="entry name" value="PLDc"/>
    <property type="match status" value="2"/>
</dbReference>
<dbReference type="PIRSF" id="PIRSF036470">
    <property type="entry name" value="PLD_plant"/>
    <property type="match status" value="1"/>
</dbReference>
<dbReference type="SMART" id="SM00239">
    <property type="entry name" value="C2"/>
    <property type="match status" value="1"/>
</dbReference>
<dbReference type="SMART" id="SM00155">
    <property type="entry name" value="PLDc"/>
    <property type="match status" value="2"/>
</dbReference>
<dbReference type="SUPFAM" id="SSF49562">
    <property type="entry name" value="C2 domain (Calcium/lipid-binding domain, CaLB)"/>
    <property type="match status" value="1"/>
</dbReference>
<dbReference type="SUPFAM" id="SSF56024">
    <property type="entry name" value="Phospholipase D/nuclease"/>
    <property type="match status" value="2"/>
</dbReference>
<dbReference type="PROSITE" id="PS50004">
    <property type="entry name" value="C2"/>
    <property type="match status" value="1"/>
</dbReference>
<dbReference type="PROSITE" id="PS50035">
    <property type="entry name" value="PLD"/>
    <property type="match status" value="2"/>
</dbReference>
<comment type="function">
    <text>Hydrolyzes glycerol-phospholipids at the terminal phosphodiesteric bond. Plays an important role in various cellular processes.</text>
</comment>
<comment type="catalytic activity">
    <reaction>
        <text>a 1,2-diacyl-sn-glycero-3-phosphocholine + H2O = a 1,2-diacyl-sn-glycero-3-phosphate + choline + H(+)</text>
        <dbReference type="Rhea" id="RHEA:14445"/>
        <dbReference type="ChEBI" id="CHEBI:15354"/>
        <dbReference type="ChEBI" id="CHEBI:15377"/>
        <dbReference type="ChEBI" id="CHEBI:15378"/>
        <dbReference type="ChEBI" id="CHEBI:57643"/>
        <dbReference type="ChEBI" id="CHEBI:58608"/>
        <dbReference type="EC" id="3.1.4.4"/>
    </reaction>
</comment>
<comment type="cofactor">
    <cofactor evidence="1">
        <name>Ca(2+)</name>
        <dbReference type="ChEBI" id="CHEBI:29108"/>
    </cofactor>
</comment>
<comment type="domain">
    <text>C2 domain is a calcium-binding fold, and the binding promotes the protein association with membranes. A lower affinity toward calcium can be anticipated for PLD alpha due to the absence of two potential calcium ligands.</text>
</comment>
<comment type="similarity">
    <text evidence="5">Belongs to the phospholipase D family. C2-PLD subfamily.</text>
</comment>
<sequence>MAHLLLHGTLEATILEADHLSNPTRATGAAPGIFRKFVEGFEDSLGLGKGATRLYATIDLGRARVGRTRVVDDEPVNPRWYEVFHIYCAHFAADVVFSVKAAQPIGATLIGRAYLPVRELLSGEAIERRLDILDAGRRRISHGPTIHVRLQFRDVAGDRHGWGRGVSGARYPGVPYTFFSQRPGCRVTLYQDAHVPDAFAPRIPLAGGGYYRQGRCWEDVFDAISNAKHLIYLTGWSVYTEITLIRDGTRQRPGGDATLGELLKRKASEGVRVLLLVWDDRTSVESLGMKWGFMSTHDAETADYFRGTDVRCVLCPRNPDAGRSAIMGAQIAYMITHHQKTVIVDHDMPVPRGGGSRRIVSFVGGLDLCDGRYDTQFHSLFRTLDTAHHSDFHQPNLDGAAVTKGGPREPWHDIHSKIEGPAAWDVLYNFEQRWRKQGGDKDLLLDLKAMADLIIPPSPVMFPDDGEAWSVQLFRSIDGGACFGFPSTPEAAARSGLVSGKNNTIDRSIQDAYIHAIRRAKNFIYIENQYFLGSSFAWKADGIRPEDIEALHLIPREISLKIVNKIEAGERFAVYVVLPMWPEGPPASGSVQAILDWQRRTMEMMYYDIAVALEAKRINADPRDYLTFFCLGNREVKLNGEYEPAGRPLDGTDYAKAQKARRFMIYVHSKMMIVDDEYIIVGSANINQRSMDGGRDSEIAMGAFQPCHLNTKGLVARGQIHGFRMSLWYEHLGMLHDNFLNPESLECVQRVNKMADKYWDLYASDELNDDLPGHLLTYPVRVTKEGTVTELPGAKFFPDTQAPVIGTKGNLPPFLTT</sequence>
<evidence type="ECO:0000250" key="1"/>
<evidence type="ECO:0000250" key="2">
    <source>
        <dbReference type="UniProtKB" id="Q38882"/>
    </source>
</evidence>
<evidence type="ECO:0000255" key="3">
    <source>
        <dbReference type="PROSITE-ProRule" id="PRU00041"/>
    </source>
</evidence>
<evidence type="ECO:0000255" key="4">
    <source>
        <dbReference type="PROSITE-ProRule" id="PRU00153"/>
    </source>
</evidence>
<evidence type="ECO:0000305" key="5"/>
<evidence type="ECO:0000312" key="6">
    <source>
        <dbReference type="EMBL" id="BAF19931.1"/>
    </source>
</evidence>
<evidence type="ECO:0000312" key="7">
    <source>
        <dbReference type="EMBL" id="EEE65982.1"/>
    </source>
</evidence>
<feature type="chain" id="PRO_0000218821" description="Phospholipase D alpha 2">
    <location>
        <begin position="1"/>
        <end position="817"/>
    </location>
</feature>
<feature type="domain" description="C2" evidence="3">
    <location>
        <begin position="1"/>
        <end position="130"/>
    </location>
</feature>
<feature type="domain" description="PLD phosphodiesterase 1" evidence="4">
    <location>
        <begin position="333"/>
        <end position="372"/>
    </location>
</feature>
<feature type="domain" description="PLD phosphodiesterase 2" evidence="4">
    <location>
        <begin position="663"/>
        <end position="690"/>
    </location>
</feature>
<feature type="active site" evidence="4">
    <location>
        <position position="338"/>
    </location>
</feature>
<feature type="active site" evidence="4">
    <location>
        <position position="340"/>
    </location>
</feature>
<feature type="active site" evidence="4">
    <location>
        <position position="345"/>
    </location>
</feature>
<feature type="active site" evidence="4">
    <location>
        <position position="668"/>
    </location>
</feature>
<feature type="active site" evidence="4">
    <location>
        <position position="670"/>
    </location>
</feature>
<feature type="active site" evidence="4">
    <location>
        <position position="675"/>
    </location>
</feature>
<feature type="binding site" evidence="2">
    <location>
        <position position="192"/>
    </location>
    <ligand>
        <name>Ca(2+)</name>
        <dbReference type="ChEBI" id="CHEBI:29108"/>
    </ligand>
</feature>
<feature type="binding site" evidence="2">
    <location>
        <position position="338"/>
    </location>
    <ligand>
        <name>a 1,2-diacyl-sn-glycero-3-phosphate</name>
        <dbReference type="ChEBI" id="CHEBI:58608"/>
    </ligand>
</feature>
<feature type="binding site" evidence="2">
    <location>
        <position position="378"/>
    </location>
    <ligand>
        <name>Ca(2+)</name>
        <dbReference type="ChEBI" id="CHEBI:29108"/>
    </ligand>
</feature>
<feature type="binding site" evidence="2">
    <location>
        <position position="412"/>
    </location>
    <ligand>
        <name>Ca(2+)</name>
        <dbReference type="ChEBI" id="CHEBI:29108"/>
    </ligand>
</feature>
<feature type="binding site" evidence="2">
    <location>
        <position position="529"/>
    </location>
    <ligand>
        <name>a 1,2-diacyl-sn-glycero-3-phosphate</name>
        <dbReference type="ChEBI" id="CHEBI:58608"/>
    </ligand>
</feature>
<feature type="binding site" evidence="2">
    <location>
        <position position="668"/>
    </location>
    <ligand>
        <name>a 1,2-diacyl-sn-glycero-3-phosphate</name>
        <dbReference type="ChEBI" id="CHEBI:58608"/>
    </ligand>
</feature>
<feature type="binding site" evidence="2">
    <location>
        <position position="730"/>
    </location>
    <ligand>
        <name>Ca(2+)</name>
        <dbReference type="ChEBI" id="CHEBI:29108"/>
    </ligand>
</feature>
<feature type="sequence conflict" description="In Ref. 1; BAA19466." evidence="5" ref="1">
    <original>G</original>
    <variation>D</variation>
    <location>
        <position position="111"/>
    </location>
</feature>
<feature type="sequence conflict" description="In Ref. 1; BAA19466." evidence="5" ref="1">
    <original>S</original>
    <variation>C</variation>
    <location>
        <position position="122"/>
    </location>
</feature>
<feature type="sequence conflict" description="In Ref. 1; BAA19466." evidence="5" ref="1">
    <original>G</original>
    <variation>R</variation>
    <location>
        <position position="365"/>
    </location>
</feature>
<feature type="sequence conflict" description="In Ref. 1; BAA19466." evidence="5" ref="1">
    <original>A</original>
    <variation>G</variation>
    <location>
        <position position="387"/>
    </location>
</feature>
<feature type="sequence conflict" description="In Ref. 1; BAA19466." evidence="5" ref="1">
    <original>D</original>
    <variation>Y</variation>
    <location>
        <position position="391"/>
    </location>
</feature>
<feature type="sequence conflict" description="In Ref. 1; BAA19466." evidence="5" ref="1">
    <original>P</original>
    <variation>A</variation>
    <location>
        <position position="395"/>
    </location>
</feature>
<feature type="sequence conflict" description="In Ref. 1; BAA19466." evidence="5" ref="1">
    <original>G</original>
    <variation>WA</variation>
    <location>
        <position position="480"/>
    </location>
</feature>
<feature type="sequence conflict" description="In Ref. 1; BAA19466." evidence="5" ref="1">
    <original>A</original>
    <variation>R</variation>
    <location>
        <position position="520"/>
    </location>
</feature>
<feature type="sequence conflict" description="In Ref. 1; BAA19466." evidence="5" ref="1">
    <original>A</original>
    <variation>P</variation>
    <location>
        <position position="550"/>
    </location>
</feature>
<feature type="sequence conflict" description="In Ref. 1; BAA19466." evidence="5" ref="1">
    <original>S</original>
    <variation>P</variation>
    <location>
        <position position="690"/>
    </location>
</feature>
<feature type="sequence conflict" description="In Ref. 1; BAA19466." evidence="5" ref="1">
    <original>GR</original>
    <variation>EG</variation>
    <location>
        <begin position="694"/>
        <end position="695"/>
    </location>
</feature>
<feature type="sequence conflict" description="In Ref. 6; AK072121." evidence="5" ref="6">
    <original>Y</original>
    <variation>F</variation>
    <location>
        <position position="729"/>
    </location>
</feature>
<reference key="1">
    <citation type="online journal article" date="1997" name="Plant Gene Register">
        <title>Characterization of two Distinctive genomic clones for phospholipase D from rice.</title>
        <authorList>
            <person name="Morioka S."/>
            <person name="Ueki J."/>
            <person name="Komari T."/>
        </authorList>
        <locator>PGR97-076</locator>
    </citation>
    <scope>NUCLEOTIDE SEQUENCE [GENOMIC DNA]</scope>
    <source>
        <strain>cv. Koshihikari</strain>
        <tissue>Leaf</tissue>
    </source>
</reference>
<reference key="2">
    <citation type="journal article" date="2005" name="Nature">
        <title>The map-based sequence of the rice genome.</title>
        <authorList>
            <consortium name="International rice genome sequencing project (IRGSP)"/>
        </authorList>
    </citation>
    <scope>NUCLEOTIDE SEQUENCE [LARGE SCALE GENOMIC DNA]</scope>
    <source>
        <strain>cv. Nipponbare</strain>
    </source>
</reference>
<reference key="3">
    <citation type="journal article" date="2008" name="Nucleic Acids Res.">
        <title>The rice annotation project database (RAP-DB): 2008 update.</title>
        <authorList>
            <consortium name="The rice annotation project (RAP)"/>
        </authorList>
    </citation>
    <scope>GENOME REANNOTATION</scope>
    <source>
        <strain>cv. Nipponbare</strain>
    </source>
</reference>
<reference key="4">
    <citation type="journal article" date="2013" name="Rice">
        <title>Improvement of the Oryza sativa Nipponbare reference genome using next generation sequence and optical map data.</title>
        <authorList>
            <person name="Kawahara Y."/>
            <person name="de la Bastide M."/>
            <person name="Hamilton J.P."/>
            <person name="Kanamori H."/>
            <person name="McCombie W.R."/>
            <person name="Ouyang S."/>
            <person name="Schwartz D.C."/>
            <person name="Tanaka T."/>
            <person name="Wu J."/>
            <person name="Zhou S."/>
            <person name="Childs K.L."/>
            <person name="Davidson R.M."/>
            <person name="Lin H."/>
            <person name="Quesada-Ocampo L."/>
            <person name="Vaillancourt B."/>
            <person name="Sakai H."/>
            <person name="Lee S.S."/>
            <person name="Kim J."/>
            <person name="Numa H."/>
            <person name="Itoh T."/>
            <person name="Buell C.R."/>
            <person name="Matsumoto T."/>
        </authorList>
    </citation>
    <scope>GENOME REANNOTATION</scope>
    <source>
        <strain>cv. Nipponbare</strain>
    </source>
</reference>
<reference key="5">
    <citation type="journal article" date="2005" name="PLoS Biol.">
        <title>The genomes of Oryza sativa: a history of duplications.</title>
        <authorList>
            <person name="Yu J."/>
            <person name="Wang J."/>
            <person name="Lin W."/>
            <person name="Li S."/>
            <person name="Li H."/>
            <person name="Zhou J."/>
            <person name="Ni P."/>
            <person name="Dong W."/>
            <person name="Hu S."/>
            <person name="Zeng C."/>
            <person name="Zhang J."/>
            <person name="Zhang Y."/>
            <person name="Li R."/>
            <person name="Xu Z."/>
            <person name="Li S."/>
            <person name="Li X."/>
            <person name="Zheng H."/>
            <person name="Cong L."/>
            <person name="Lin L."/>
            <person name="Yin J."/>
            <person name="Geng J."/>
            <person name="Li G."/>
            <person name="Shi J."/>
            <person name="Liu J."/>
            <person name="Lv H."/>
            <person name="Li J."/>
            <person name="Wang J."/>
            <person name="Deng Y."/>
            <person name="Ran L."/>
            <person name="Shi X."/>
            <person name="Wang X."/>
            <person name="Wu Q."/>
            <person name="Li C."/>
            <person name="Ren X."/>
            <person name="Wang J."/>
            <person name="Wang X."/>
            <person name="Li D."/>
            <person name="Liu D."/>
            <person name="Zhang X."/>
            <person name="Ji Z."/>
            <person name="Zhao W."/>
            <person name="Sun Y."/>
            <person name="Zhang Z."/>
            <person name="Bao J."/>
            <person name="Han Y."/>
            <person name="Dong L."/>
            <person name="Ji J."/>
            <person name="Chen P."/>
            <person name="Wu S."/>
            <person name="Liu J."/>
            <person name="Xiao Y."/>
            <person name="Bu D."/>
            <person name="Tan J."/>
            <person name="Yang L."/>
            <person name="Ye C."/>
            <person name="Zhang J."/>
            <person name="Xu J."/>
            <person name="Zhou Y."/>
            <person name="Yu Y."/>
            <person name="Zhang B."/>
            <person name="Zhuang S."/>
            <person name="Wei H."/>
            <person name="Liu B."/>
            <person name="Lei M."/>
            <person name="Yu H."/>
            <person name="Li Y."/>
            <person name="Xu H."/>
            <person name="Wei S."/>
            <person name="He X."/>
            <person name="Fang L."/>
            <person name="Zhang Z."/>
            <person name="Zhang Y."/>
            <person name="Huang X."/>
            <person name="Su Z."/>
            <person name="Tong W."/>
            <person name="Li J."/>
            <person name="Tong Z."/>
            <person name="Li S."/>
            <person name="Ye J."/>
            <person name="Wang L."/>
            <person name="Fang L."/>
            <person name="Lei T."/>
            <person name="Chen C.-S."/>
            <person name="Chen H.-C."/>
            <person name="Xu Z."/>
            <person name="Li H."/>
            <person name="Huang H."/>
            <person name="Zhang F."/>
            <person name="Xu H."/>
            <person name="Li N."/>
            <person name="Zhao C."/>
            <person name="Li S."/>
            <person name="Dong L."/>
            <person name="Huang Y."/>
            <person name="Li L."/>
            <person name="Xi Y."/>
            <person name="Qi Q."/>
            <person name="Li W."/>
            <person name="Zhang B."/>
            <person name="Hu W."/>
            <person name="Zhang Y."/>
            <person name="Tian X."/>
            <person name="Jiao Y."/>
            <person name="Liang X."/>
            <person name="Jin J."/>
            <person name="Gao L."/>
            <person name="Zheng W."/>
            <person name="Hao B."/>
            <person name="Liu S.-M."/>
            <person name="Wang W."/>
            <person name="Yuan L."/>
            <person name="Cao M."/>
            <person name="McDermott J."/>
            <person name="Samudrala R."/>
            <person name="Wang J."/>
            <person name="Wong G.K.-S."/>
            <person name="Yang H."/>
        </authorList>
    </citation>
    <scope>NUCLEOTIDE SEQUENCE [LARGE SCALE GENOMIC DNA]</scope>
    <source>
        <strain>cv. Nipponbare</strain>
    </source>
</reference>
<reference key="6">
    <citation type="journal article" date="2003" name="Science">
        <title>Collection, mapping, and annotation of over 28,000 cDNA clones from japonica rice.</title>
        <authorList>
            <consortium name="The rice full-length cDNA consortium"/>
        </authorList>
    </citation>
    <scope>NUCLEOTIDE SEQUENCE [LARGE SCALE MRNA]</scope>
    <source>
        <strain>cv. Nipponbare</strain>
    </source>
</reference>
<accession>P93844</accession>
<accession>A0A0P0WYW9</accession>
<accession>Q0DB42</accession>
<accession>Q69X20</accession>
<keyword id="KW-0106">Calcium</keyword>
<keyword id="KW-0378">Hydrolase</keyword>
<keyword id="KW-0442">Lipid degradation</keyword>
<keyword id="KW-0443">Lipid metabolism</keyword>
<keyword id="KW-0479">Metal-binding</keyword>
<keyword id="KW-1185">Reference proteome</keyword>
<keyword id="KW-0677">Repeat</keyword>
<organism>
    <name type="scientific">Oryza sativa subsp. japonica</name>
    <name type="common">Rice</name>
    <dbReference type="NCBI Taxonomy" id="39947"/>
    <lineage>
        <taxon>Eukaryota</taxon>
        <taxon>Viridiplantae</taxon>
        <taxon>Streptophyta</taxon>
        <taxon>Embryophyta</taxon>
        <taxon>Tracheophyta</taxon>
        <taxon>Spermatophyta</taxon>
        <taxon>Magnoliopsida</taxon>
        <taxon>Liliopsida</taxon>
        <taxon>Poales</taxon>
        <taxon>Poaceae</taxon>
        <taxon>BOP clade</taxon>
        <taxon>Oryzoideae</taxon>
        <taxon>Oryzeae</taxon>
        <taxon>Oryzinae</taxon>
        <taxon>Oryza</taxon>
        <taxon>Oryza sativa</taxon>
    </lineage>
</organism>
<proteinExistence type="evidence at transcript level"/>
<name>PLDA2_ORYSJ</name>
<gene>
    <name type="primary">PLD2</name>
    <name evidence="6" type="ordered locus">Os06g0604400</name>
    <name evidence="5" type="ordered locus">LOC_Os06g40190</name>
    <name evidence="7" type="ORF">OsJ_21907</name>
    <name type="ORF">P0481H08.5</name>
</gene>
<protein>
    <recommendedName>
        <fullName>Phospholipase D alpha 2</fullName>
        <shortName>PLD alpha 2</shortName>
        <ecNumber>3.1.4.4</ecNumber>
    </recommendedName>
    <alternativeName>
        <fullName>Choline phosphatase 2</fullName>
    </alternativeName>
    <alternativeName>
        <fullName>Phosphatidylcholine-hydrolyzing phospholipase D 2</fullName>
    </alternativeName>
</protein>